<proteinExistence type="evidence at protein level"/>
<accession>Q9BPU6</accession>
<accession>Q8TCL6</accession>
<accession>Q9NQC4</accession>
<accession>Q9NRY9</accession>
<dbReference type="EMBL" id="AF264015">
    <property type="protein sequence ID" value="AAK16830.1"/>
    <property type="molecule type" value="mRNA"/>
</dbReference>
<dbReference type="EMBL" id="AJ251275">
    <property type="protein sequence ID" value="CAB95124.1"/>
    <property type="molecule type" value="mRNA"/>
</dbReference>
<dbReference type="EMBL" id="AF157634">
    <property type="protein sequence ID" value="AAF80348.1"/>
    <property type="molecule type" value="mRNA"/>
</dbReference>
<dbReference type="EMBL" id="BT006871">
    <property type="protein sequence ID" value="AAP35517.1"/>
    <property type="molecule type" value="mRNA"/>
</dbReference>
<dbReference type="EMBL" id="BC002874">
    <property type="protein sequence ID" value="AAH02874.1"/>
    <property type="molecule type" value="mRNA"/>
</dbReference>
<dbReference type="EMBL" id="AL713706">
    <property type="protein sequence ID" value="CAD28503.1"/>
    <property type="molecule type" value="mRNA"/>
</dbReference>
<dbReference type="CCDS" id="CCDS1730.1"/>
<dbReference type="RefSeq" id="NP_001240652.1">
    <property type="nucleotide sequence ID" value="NM_001253723.2"/>
</dbReference>
<dbReference type="RefSeq" id="NP_001240653.1">
    <property type="nucleotide sequence ID" value="NM_001253724.2"/>
</dbReference>
<dbReference type="RefSeq" id="NP_064519.2">
    <property type="nucleotide sequence ID" value="NM_020134.3"/>
</dbReference>
<dbReference type="RefSeq" id="XP_024308775.1">
    <property type="nucleotide sequence ID" value="XM_024453007.2"/>
</dbReference>
<dbReference type="RefSeq" id="XP_054199026.1">
    <property type="nucleotide sequence ID" value="XM_054343051.1"/>
</dbReference>
<dbReference type="PDB" id="4B90">
    <property type="method" value="X-ray"/>
    <property type="resolution" value="2.20 A"/>
    <property type="chains" value="A/B=1-564"/>
</dbReference>
<dbReference type="PDB" id="4B91">
    <property type="method" value="X-ray"/>
    <property type="resolution" value="1.70 A"/>
    <property type="chains" value="A/B=1-483"/>
</dbReference>
<dbReference type="PDB" id="4B92">
    <property type="method" value="X-ray"/>
    <property type="resolution" value="2.90 A"/>
    <property type="chains" value="A/B=1-483"/>
</dbReference>
<dbReference type="PDBsum" id="4B90"/>
<dbReference type="PDBsum" id="4B91"/>
<dbReference type="PDBsum" id="4B92"/>
<dbReference type="SMR" id="Q9BPU6"/>
<dbReference type="BioGRID" id="121226">
    <property type="interactions" value="67"/>
</dbReference>
<dbReference type="FunCoup" id="Q9BPU6">
    <property type="interactions" value="786"/>
</dbReference>
<dbReference type="IntAct" id="Q9BPU6">
    <property type="interactions" value="55"/>
</dbReference>
<dbReference type="MINT" id="Q9BPU6"/>
<dbReference type="STRING" id="9606.ENSP00000288699"/>
<dbReference type="MEROPS" id="M38.978"/>
<dbReference type="GlyGen" id="Q9BPU6">
    <property type="glycosylation" value="1 site, 1 O-linked glycan (1 site)"/>
</dbReference>
<dbReference type="iPTMnet" id="Q9BPU6"/>
<dbReference type="PhosphoSitePlus" id="Q9BPU6"/>
<dbReference type="SwissPalm" id="Q9BPU6"/>
<dbReference type="BioMuta" id="DPYSL5"/>
<dbReference type="DMDM" id="20137929"/>
<dbReference type="jPOST" id="Q9BPU6"/>
<dbReference type="MassIVE" id="Q9BPU6"/>
<dbReference type="PaxDb" id="9606-ENSP00000288699"/>
<dbReference type="PeptideAtlas" id="Q9BPU6"/>
<dbReference type="ProteomicsDB" id="78573"/>
<dbReference type="Pumba" id="Q9BPU6"/>
<dbReference type="Antibodypedia" id="28026">
    <property type="antibodies" value="234 antibodies from 28 providers"/>
</dbReference>
<dbReference type="DNASU" id="56896"/>
<dbReference type="Ensembl" id="ENST00000288699.11">
    <property type="protein sequence ID" value="ENSP00000288699.6"/>
    <property type="gene ID" value="ENSG00000157851.17"/>
</dbReference>
<dbReference type="Ensembl" id="ENST00000401478.5">
    <property type="protein sequence ID" value="ENSP00000385549.1"/>
    <property type="gene ID" value="ENSG00000157851.17"/>
</dbReference>
<dbReference type="Ensembl" id="ENST00000614712.4">
    <property type="protein sequence ID" value="ENSP00000481305.1"/>
    <property type="gene ID" value="ENSG00000157851.17"/>
</dbReference>
<dbReference type="GeneID" id="56896"/>
<dbReference type="KEGG" id="hsa:56896"/>
<dbReference type="MANE-Select" id="ENST00000288699.11">
    <property type="protein sequence ID" value="ENSP00000288699.6"/>
    <property type="RefSeq nucleotide sequence ID" value="NM_020134.4"/>
    <property type="RefSeq protein sequence ID" value="NP_064519.2"/>
</dbReference>
<dbReference type="UCSC" id="uc002rhu.4">
    <property type="organism name" value="human"/>
</dbReference>
<dbReference type="AGR" id="HGNC:20637"/>
<dbReference type="CTD" id="56896"/>
<dbReference type="DisGeNET" id="56896"/>
<dbReference type="GeneCards" id="DPYSL5"/>
<dbReference type="HGNC" id="HGNC:20637">
    <property type="gene designation" value="DPYSL5"/>
</dbReference>
<dbReference type="HPA" id="ENSG00000157851">
    <property type="expression patterns" value="Tissue enriched (brain)"/>
</dbReference>
<dbReference type="MalaCards" id="DPYSL5"/>
<dbReference type="MIM" id="608383">
    <property type="type" value="gene"/>
</dbReference>
<dbReference type="MIM" id="619435">
    <property type="type" value="phenotype"/>
</dbReference>
<dbReference type="neXtProt" id="NX_Q9BPU6"/>
<dbReference type="OpenTargets" id="ENSG00000157851"/>
<dbReference type="Orphanet" id="7">
    <property type="disease" value="3C syndrome"/>
</dbReference>
<dbReference type="Orphanet" id="528084">
    <property type="disease" value="Non-specific syndromic intellectual disability"/>
</dbReference>
<dbReference type="PharmGKB" id="PA134927413"/>
<dbReference type="VEuPathDB" id="HostDB:ENSG00000157851"/>
<dbReference type="eggNOG" id="KOG2584">
    <property type="taxonomic scope" value="Eukaryota"/>
</dbReference>
<dbReference type="GeneTree" id="ENSGT01030000234527"/>
<dbReference type="HOGENOM" id="CLU_015572_2_2_1"/>
<dbReference type="InParanoid" id="Q9BPU6"/>
<dbReference type="OMA" id="CEHTPSI"/>
<dbReference type="OrthoDB" id="1924787at2759"/>
<dbReference type="PAN-GO" id="Q9BPU6">
    <property type="GO annotations" value="0 GO annotations based on evolutionary models"/>
</dbReference>
<dbReference type="PhylomeDB" id="Q9BPU6"/>
<dbReference type="TreeFam" id="TF314706"/>
<dbReference type="PathwayCommons" id="Q9BPU6"/>
<dbReference type="Reactome" id="R-HSA-399956">
    <property type="pathway name" value="CRMPs in Sema3A signaling"/>
</dbReference>
<dbReference type="SignaLink" id="Q9BPU6"/>
<dbReference type="SIGNOR" id="Q9BPU6"/>
<dbReference type="BioGRID-ORCS" id="56896">
    <property type="hits" value="12 hits in 1151 CRISPR screens"/>
</dbReference>
<dbReference type="ChiTaRS" id="DPYSL5">
    <property type="organism name" value="human"/>
</dbReference>
<dbReference type="EvolutionaryTrace" id="Q9BPU6"/>
<dbReference type="GeneWiki" id="DPYSL5"/>
<dbReference type="GenomeRNAi" id="56896"/>
<dbReference type="Pharos" id="Q9BPU6">
    <property type="development level" value="Tbio"/>
</dbReference>
<dbReference type="PRO" id="PR:Q9BPU6"/>
<dbReference type="Proteomes" id="UP000005640">
    <property type="component" value="Chromosome 2"/>
</dbReference>
<dbReference type="RNAct" id="Q9BPU6">
    <property type="molecule type" value="protein"/>
</dbReference>
<dbReference type="Bgee" id="ENSG00000157851">
    <property type="expression patterns" value="Expressed in cortical plate and 102 other cell types or tissues"/>
</dbReference>
<dbReference type="ExpressionAtlas" id="Q9BPU6">
    <property type="expression patterns" value="baseline and differential"/>
</dbReference>
<dbReference type="GO" id="GO:0005829">
    <property type="term" value="C:cytosol"/>
    <property type="evidence" value="ECO:0000318"/>
    <property type="project" value="GO_Central"/>
</dbReference>
<dbReference type="GO" id="GO:0030425">
    <property type="term" value="C:dendrite"/>
    <property type="evidence" value="ECO:0007669"/>
    <property type="project" value="Ensembl"/>
</dbReference>
<dbReference type="GO" id="GO:0098978">
    <property type="term" value="C:glutamatergic synapse"/>
    <property type="evidence" value="ECO:0007669"/>
    <property type="project" value="Ensembl"/>
</dbReference>
<dbReference type="GO" id="GO:0043025">
    <property type="term" value="C:neuronal cell body"/>
    <property type="evidence" value="ECO:0007669"/>
    <property type="project" value="Ensembl"/>
</dbReference>
<dbReference type="GO" id="GO:0032991">
    <property type="term" value="C:protein-containing complex"/>
    <property type="evidence" value="ECO:0007669"/>
    <property type="project" value="Ensembl"/>
</dbReference>
<dbReference type="GO" id="GO:0016812">
    <property type="term" value="F:hydrolase activity, acting on carbon-nitrogen (but not peptide) bonds, in cyclic amides"/>
    <property type="evidence" value="ECO:0000318"/>
    <property type="project" value="GO_Central"/>
</dbReference>
<dbReference type="GO" id="GO:0007411">
    <property type="term" value="P:axon guidance"/>
    <property type="evidence" value="ECO:0000304"/>
    <property type="project" value="ProtInc"/>
</dbReference>
<dbReference type="GO" id="GO:0050774">
    <property type="term" value="P:negative regulation of dendrite morphogenesis"/>
    <property type="evidence" value="ECO:0000315"/>
    <property type="project" value="UniProtKB"/>
</dbReference>
<dbReference type="GO" id="GO:0007399">
    <property type="term" value="P:nervous system development"/>
    <property type="evidence" value="ECO:0000304"/>
    <property type="project" value="ProtInc"/>
</dbReference>
<dbReference type="GO" id="GO:0007165">
    <property type="term" value="P:signal transduction"/>
    <property type="evidence" value="ECO:0000304"/>
    <property type="project" value="ProtInc"/>
</dbReference>
<dbReference type="CDD" id="cd01314">
    <property type="entry name" value="D-HYD"/>
    <property type="match status" value="1"/>
</dbReference>
<dbReference type="FunFam" id="3.20.20.140:FF:000076">
    <property type="entry name" value="Dihydropyrimidinase like 2"/>
    <property type="match status" value="1"/>
</dbReference>
<dbReference type="FunFam" id="2.30.40.10:FF:000029">
    <property type="entry name" value="Dihydropyrimidinase-related protein 5"/>
    <property type="match status" value="1"/>
</dbReference>
<dbReference type="Gene3D" id="3.20.20.140">
    <property type="entry name" value="Metal-dependent hydrolases"/>
    <property type="match status" value="1"/>
</dbReference>
<dbReference type="Gene3D" id="2.30.40.10">
    <property type="entry name" value="Urease, subunit C, domain 1"/>
    <property type="match status" value="1"/>
</dbReference>
<dbReference type="InterPro" id="IPR006680">
    <property type="entry name" value="Amidohydro-rel"/>
</dbReference>
<dbReference type="InterPro" id="IPR011778">
    <property type="entry name" value="Hydantoinase/dihydroPyrase"/>
</dbReference>
<dbReference type="InterPro" id="IPR011059">
    <property type="entry name" value="Metal-dep_hydrolase_composite"/>
</dbReference>
<dbReference type="InterPro" id="IPR032466">
    <property type="entry name" value="Metal_Hydrolase"/>
</dbReference>
<dbReference type="InterPro" id="IPR050378">
    <property type="entry name" value="Metallo-dep_Hydrolases_sf"/>
</dbReference>
<dbReference type="NCBIfam" id="TIGR02033">
    <property type="entry name" value="D-hydantoinase"/>
    <property type="match status" value="1"/>
</dbReference>
<dbReference type="PANTHER" id="PTHR11647:SF58">
    <property type="entry name" value="DIHYDROPYRIMIDINASE-RELATED PROTEIN 5"/>
    <property type="match status" value="1"/>
</dbReference>
<dbReference type="PANTHER" id="PTHR11647">
    <property type="entry name" value="HYDRANTOINASE/DIHYDROPYRIMIDINASE FAMILY MEMBER"/>
    <property type="match status" value="1"/>
</dbReference>
<dbReference type="Pfam" id="PF01979">
    <property type="entry name" value="Amidohydro_1"/>
    <property type="match status" value="1"/>
</dbReference>
<dbReference type="SUPFAM" id="SSF51338">
    <property type="entry name" value="Composite domain of metallo-dependent hydrolases"/>
    <property type="match status" value="2"/>
</dbReference>
<dbReference type="SUPFAM" id="SSF51556">
    <property type="entry name" value="Metallo-dependent hydrolases"/>
    <property type="match status" value="1"/>
</dbReference>
<keyword id="KW-0002">3D-structure</keyword>
<keyword id="KW-0963">Cytoplasm</keyword>
<keyword id="KW-0903">Direct protein sequencing</keyword>
<keyword id="KW-0225">Disease variant</keyword>
<keyword id="KW-0488">Methylation</keyword>
<keyword id="KW-0597">Phosphoprotein</keyword>
<keyword id="KW-1267">Proteomics identification</keyword>
<keyword id="KW-1185">Reference proteome</keyword>
<protein>
    <recommendedName>
        <fullName>Dihydropyrimidinase-related protein 5</fullName>
        <shortName>DRP-5</shortName>
    </recommendedName>
    <alternativeName>
        <fullName>CRMP3-associated molecule</fullName>
        <shortName>CRAM</shortName>
    </alternativeName>
    <alternativeName>
        <fullName>Collapsin response mediator protein 5</fullName>
        <shortName>CRMP-5</shortName>
    </alternativeName>
    <alternativeName>
        <fullName>UNC33-like phosphoprotein 6</fullName>
        <shortName>ULIP-6</shortName>
    </alternativeName>
</protein>
<sequence length="564" mass="61421">MLANSASVRILIKGGKVVNDDCTHEADVYIENGIIQQVGRELMIPGGAKVIDATGKLVIPGGIDTSTHFHQTFMNATCVDDFYHGTKAALVGGTTMIIGHVLPDKETSLVDAYEKCRGLADPKVCCDYALHVGITWWAPKVKAEMETLVREKGVNSFQMFMTYKDLYMLRDSELYQVLHACKDIGAIARVHAENGELVAEGAKEALDLGITGPEGIEISRPEELEAEATHRVITIANRTHCPIYLVNVSSISAGDVIAAAKMQGKVVLAETTTAHATLTGLHYYHQDWSHAAAYVTVPPLRLDTNTSTYLMSLLANDTLNIVASDHRPFTTKQKAMGKEDFTKIPHGVSGVQDRMSVIWERGVVGGKMDENRFVAVTSSNAAKLLNLYPRKGRIIPGADADVVVWDPEATKTISASTQVQGGDFNLYENMRCHGVPLVTISRGRVVYENGVFMCAEGTGKFCPLRSFPDTVYKKLVQREKTLKVRGVDRTPYLGDVAVVVHPGKKEMGTPLADTPTRPVTRHGGMRDLHESSFSLSGSQIDDHVPKRASARILAPPGGRSSGIW</sequence>
<comment type="function">
    <text evidence="2">Involved in the negative regulation of dendrite outgrowth.</text>
</comment>
<comment type="subunit">
    <text evidence="1 2">Homotetramer, and heterotetramer with other DPYS-like proteins. Interacts with DPYSL2, DPYSL3 and DPYSL4 (By similarity). Interacts with MAP2 and TUBB3 (PubMed:33894126).</text>
</comment>
<comment type="interaction">
    <interactant intactId="EBI-724653">
        <id>Q9BPU6</id>
    </interactant>
    <interactant intactId="EBI-718729">
        <id>P55212</id>
        <label>CASP6</label>
    </interactant>
    <organismsDiffer>false</organismsDiffer>
    <experiments>3</experiments>
</comment>
<comment type="interaction">
    <interactant intactId="EBI-724653">
        <id>Q9BPU6</id>
    </interactant>
    <interactant intactId="EBI-11901329">
        <id>Q6P656</id>
        <label>CFAP161</label>
    </interactant>
    <organismsDiffer>false</organismsDiffer>
    <experiments>3</experiments>
</comment>
<comment type="interaction">
    <interactant intactId="EBI-724653">
        <id>Q9BPU6</id>
    </interactant>
    <interactant intactId="EBI-745535">
        <id>Q8NI60</id>
        <label>COQ8A</label>
    </interactant>
    <organismsDiffer>false</organismsDiffer>
    <experiments>3</experiments>
</comment>
<comment type="interaction">
    <interactant intactId="EBI-724653">
        <id>Q9BPU6</id>
    </interactant>
    <interactant intactId="EBI-1104711">
        <id>Q16555</id>
        <label>DPYSL2</label>
    </interactant>
    <organismsDiffer>false</organismsDiffer>
    <experiments>17</experiments>
</comment>
<comment type="interaction">
    <interactant intactId="EBI-724653">
        <id>Q9BPU6</id>
    </interactant>
    <interactant intactId="EBI-10232496">
        <id>Q14195-2</id>
        <label>DPYSL3</label>
    </interactant>
    <organismsDiffer>false</organismsDiffer>
    <experiments>3</experiments>
</comment>
<comment type="interaction">
    <interactant intactId="EBI-724653">
        <id>Q9BPU6</id>
    </interactant>
    <interactant intactId="EBI-348399">
        <id>P22607</id>
        <label>FGFR3</label>
    </interactant>
    <organismsDiffer>false</organismsDiffer>
    <experiments>3</experiments>
</comment>
<comment type="interaction">
    <interactant intactId="EBI-724653">
        <id>Q9BPU6</id>
    </interactant>
    <interactant intactId="EBI-8285963">
        <id>Q14957</id>
        <label>GRIN2C</label>
    </interactant>
    <organismsDiffer>false</organismsDiffer>
    <experiments>3</experiments>
</comment>
<comment type="interaction">
    <interactant intactId="EBI-724653">
        <id>Q9BPU6</id>
    </interactant>
    <interactant intactId="EBI-351506">
        <id>P06396</id>
        <label>GSN</label>
    </interactant>
    <organismsDiffer>false</organismsDiffer>
    <experiments>3</experiments>
</comment>
<comment type="interaction">
    <interactant intactId="EBI-724653">
        <id>Q9BPU6</id>
    </interactant>
    <interactant intactId="EBI-473886">
        <id>O00291</id>
        <label>HIP1</label>
    </interactant>
    <organismsDiffer>false</organismsDiffer>
    <experiments>3</experiments>
</comment>
<comment type="interaction">
    <interactant intactId="EBI-724653">
        <id>Q9BPU6</id>
    </interactant>
    <interactant intactId="EBI-352682">
        <id>P04792</id>
        <label>HSPB1</label>
    </interactant>
    <organismsDiffer>false</organismsDiffer>
    <experiments>3</experiments>
</comment>
<comment type="interaction">
    <interactant intactId="EBI-724653">
        <id>Q9BPU6</id>
    </interactant>
    <interactant intactId="EBI-466029">
        <id>P42858</id>
        <label>HTT</label>
    </interactant>
    <organismsDiffer>false</organismsDiffer>
    <experiments>9</experiments>
</comment>
<comment type="interaction">
    <interactant intactId="EBI-724653">
        <id>Q9BPU6</id>
    </interactant>
    <interactant intactId="EBI-10975473">
        <id>O60333-2</id>
        <label>KIF1B</label>
    </interactant>
    <organismsDiffer>false</organismsDiffer>
    <experiments>3</experiments>
</comment>
<comment type="interaction">
    <interactant intactId="EBI-724653">
        <id>Q9BPU6</id>
    </interactant>
    <interactant intactId="EBI-948266">
        <id>O14901</id>
        <label>KLF11</label>
    </interactant>
    <organismsDiffer>false</organismsDiffer>
    <experiments>3</experiments>
</comment>
<comment type="interaction">
    <interactant intactId="EBI-724653">
        <id>Q9BPU6</id>
    </interactant>
    <interactant intactId="EBI-21591415">
        <id>P13473-2</id>
        <label>LAMP2</label>
    </interactant>
    <organismsDiffer>false</organismsDiffer>
    <experiments>3</experiments>
</comment>
<comment type="interaction">
    <interactant intactId="EBI-724653">
        <id>Q9BPU6</id>
    </interactant>
    <interactant intactId="EBI-6190702">
        <id>P28331-2</id>
        <label>NDUFS1</label>
    </interactant>
    <organismsDiffer>false</organismsDiffer>
    <experiments>3</experiments>
</comment>
<comment type="interaction">
    <interactant intactId="EBI-724653">
        <id>Q9BPU6</id>
    </interactant>
    <interactant intactId="EBI-988601">
        <id>O43933</id>
        <label>PEX1</label>
    </interactant>
    <organismsDiffer>false</organismsDiffer>
    <experiments>3</experiments>
</comment>
<comment type="interaction">
    <interactant intactId="EBI-724653">
        <id>Q9BPU6</id>
    </interactant>
    <interactant intactId="EBI-5280197">
        <id>O75400-2</id>
        <label>PRPF40A</label>
    </interactant>
    <organismsDiffer>false</organismsDiffer>
    <experiments>3</experiments>
</comment>
<comment type="interaction">
    <interactant intactId="EBI-724653">
        <id>Q9BPU6</id>
    </interactant>
    <interactant intactId="EBI-286642">
        <id>P62826</id>
        <label>RAN</label>
    </interactant>
    <organismsDiffer>false</organismsDiffer>
    <experiments>3</experiments>
</comment>
<comment type="interaction">
    <interactant intactId="EBI-724653">
        <id>Q9BPU6</id>
    </interactant>
    <interactant intactId="EBI-396669">
        <id>Q9Y3C5</id>
        <label>RNF11</label>
    </interactant>
    <organismsDiffer>false</organismsDiffer>
    <experiments>3</experiments>
</comment>
<comment type="interaction">
    <interactant intactId="EBI-724653">
        <id>Q9BPU6</id>
    </interactant>
    <interactant intactId="EBI-741480">
        <id>Q9UMX0</id>
        <label>UBQLN1</label>
    </interactant>
    <organismsDiffer>false</organismsDiffer>
    <experiments>3</experiments>
</comment>
<comment type="interaction">
    <interactant intactId="EBI-724653">
        <id>Q9BPU6</id>
    </interactant>
    <interactant intactId="EBI-720609">
        <id>O76024</id>
        <label>WFS1</label>
    </interactant>
    <organismsDiffer>false</organismsDiffer>
    <experiments>3</experiments>
</comment>
<comment type="interaction">
    <interactant intactId="EBI-724653">
        <id>Q9BPU6</id>
    </interactant>
    <interactant intactId="EBI-25900580">
        <id>Q9Y649</id>
    </interactant>
    <organismsDiffer>false</organismsDiffer>
    <experiments>3</experiments>
</comment>
<comment type="subcellular location">
    <subcellularLocation>
        <location evidence="3">Cytoplasm</location>
    </subcellularLocation>
</comment>
<comment type="disease" evidence="2">
    <disease id="DI-06167">
        <name>Ritscher-Schinzel syndrome 4</name>
        <acronym>RTSC4</acronym>
        <description>An autosomal dominant form of Ritscher-Schinzel syndrome, a developmental malformation syndrome characterized by cerebellar brain anomalies associated with global developmental delay and impaired intellectual development, congenital heart defects, and craniofacial abnormalities.</description>
        <dbReference type="MIM" id="619435"/>
    </disease>
    <text>The disease is caused by variants affecting the gene represented in this entry.</text>
</comment>
<comment type="similarity">
    <text evidence="3">Belongs to the metallo-dependent hydrolases superfamily. Hydantoinase/dihydropyrimidinase family.</text>
</comment>
<comment type="caution">
    <text evidence="3">Lacks most of the conserved residues that are essential for binding the metal cofactor and hence for dihydropyrimidinase activity. Its enzyme activity is therefore unsure.</text>
</comment>
<evidence type="ECO:0000250" key="1">
    <source>
        <dbReference type="UniProtKB" id="Q9EQF6"/>
    </source>
</evidence>
<evidence type="ECO:0000269" key="2">
    <source>
    </source>
</evidence>
<evidence type="ECO:0000305" key="3"/>
<evidence type="ECO:0007829" key="4">
    <source>
        <dbReference type="PDB" id="4B91"/>
    </source>
</evidence>
<feature type="chain" id="PRO_0000165924" description="Dihydropyrimidinase-related protein 5">
    <location>
        <begin position="1"/>
        <end position="564"/>
    </location>
</feature>
<feature type="modified residue" description="Phosphothreonine" evidence="1">
    <location>
        <position position="509"/>
    </location>
</feature>
<feature type="modified residue" description="Phosphothreonine" evidence="1">
    <location>
        <position position="514"/>
    </location>
</feature>
<feature type="modified residue" description="Phosphoserine" evidence="1">
    <location>
        <position position="532"/>
    </location>
</feature>
<feature type="modified residue" description="Phosphoserine" evidence="1">
    <location>
        <position position="538"/>
    </location>
</feature>
<feature type="modified residue" description="Omega-N-methylarginine" evidence="1">
    <location>
        <position position="559"/>
    </location>
</feature>
<feature type="sequence variant" id="VAR_086051" description="In RTSC4; reduced inhibition of dendrite development in transfected primary neurons; decreased interaction with MAP2; decreased interaction with TUBB3." evidence="2">
    <original>E</original>
    <variation>K</variation>
    <location>
        <position position="41"/>
    </location>
</feature>
<feature type="sequence variant" id="VAR_086052" description="In RTSC4; reduced inhibition of dendrite development in transfected primary neurons; decreased interaction with MAP2; decreased interaction with TUBB3." evidence="2">
    <original>G</original>
    <variation>R</variation>
    <location>
        <position position="47"/>
    </location>
</feature>
<feature type="sequence conflict" description="In Ref. 2; CAB95124." evidence="3" ref="2">
    <original>N</original>
    <variation>S</variation>
    <location>
        <position position="380"/>
    </location>
</feature>
<feature type="sequence conflict" description="In Ref. 3; AAF80348." evidence="3" ref="3">
    <original>A</original>
    <variation>S</variation>
    <location>
        <position position="382"/>
    </location>
</feature>
<feature type="sequence conflict" description="In Ref. 3; AAF80348." evidence="3" ref="3">
    <original>D</original>
    <variation>H</variation>
    <location>
        <position position="399"/>
    </location>
</feature>
<feature type="strand" evidence="4">
    <location>
        <begin position="9"/>
        <end position="14"/>
    </location>
</feature>
<feature type="strand" evidence="4">
    <location>
        <begin position="16"/>
        <end position="18"/>
    </location>
</feature>
<feature type="strand" evidence="4">
    <location>
        <begin position="23"/>
        <end position="25"/>
    </location>
</feature>
<feature type="strand" evidence="4">
    <location>
        <begin position="27"/>
        <end position="31"/>
    </location>
</feature>
<feature type="strand" evidence="4">
    <location>
        <begin position="34"/>
        <end position="41"/>
    </location>
</feature>
<feature type="strand" evidence="4">
    <location>
        <begin position="49"/>
        <end position="52"/>
    </location>
</feature>
<feature type="strand" evidence="4">
    <location>
        <begin position="57"/>
        <end position="60"/>
    </location>
</feature>
<feature type="strand" evidence="4">
    <location>
        <begin position="62"/>
        <end position="67"/>
    </location>
</feature>
<feature type="helix" evidence="4">
    <location>
        <begin position="82"/>
        <end position="91"/>
    </location>
</feature>
<feature type="strand" evidence="4">
    <location>
        <begin position="94"/>
        <end position="101"/>
    </location>
</feature>
<feature type="helix" evidence="4">
    <location>
        <begin position="109"/>
        <end position="120"/>
    </location>
</feature>
<feature type="turn" evidence="4">
    <location>
        <begin position="121"/>
        <end position="123"/>
    </location>
</feature>
<feature type="strand" evidence="4">
    <location>
        <begin position="125"/>
        <end position="133"/>
    </location>
</feature>
<feature type="helix" evidence="4">
    <location>
        <begin position="139"/>
        <end position="151"/>
    </location>
</feature>
<feature type="strand" evidence="4">
    <location>
        <begin position="156"/>
        <end position="161"/>
    </location>
</feature>
<feature type="turn" evidence="4">
    <location>
        <begin position="164"/>
        <end position="166"/>
    </location>
</feature>
<feature type="helix" evidence="4">
    <location>
        <begin position="171"/>
        <end position="183"/>
    </location>
</feature>
<feature type="strand" evidence="4">
    <location>
        <begin position="187"/>
        <end position="191"/>
    </location>
</feature>
<feature type="helix" evidence="4">
    <location>
        <begin position="195"/>
        <end position="207"/>
    </location>
</feature>
<feature type="helix" evidence="4">
    <location>
        <begin position="215"/>
        <end position="218"/>
    </location>
</feature>
<feature type="helix" evidence="4">
    <location>
        <begin position="223"/>
        <end position="239"/>
    </location>
</feature>
<feature type="strand" evidence="4">
    <location>
        <begin position="243"/>
        <end position="245"/>
    </location>
</feature>
<feature type="helix" evidence="4">
    <location>
        <begin position="251"/>
        <end position="262"/>
    </location>
</feature>
<feature type="strand" evidence="4">
    <location>
        <begin position="267"/>
        <end position="272"/>
    </location>
</feature>
<feature type="helix" evidence="4">
    <location>
        <begin position="273"/>
        <end position="277"/>
    </location>
</feature>
<feature type="helix" evidence="4">
    <location>
        <begin position="280"/>
        <end position="284"/>
    </location>
</feature>
<feature type="helix" evidence="4">
    <location>
        <begin position="288"/>
        <end position="292"/>
    </location>
</feature>
<feature type="helix" evidence="4">
    <location>
        <begin position="306"/>
        <end position="315"/>
    </location>
</feature>
<feature type="strand" evidence="4">
    <location>
        <begin position="321"/>
        <end position="323"/>
    </location>
</feature>
<feature type="helix" evidence="4">
    <location>
        <begin position="331"/>
        <end position="334"/>
    </location>
</feature>
<feature type="helix" evidence="4">
    <location>
        <begin position="335"/>
        <end position="337"/>
    </location>
</feature>
<feature type="helix" evidence="4">
    <location>
        <begin position="341"/>
        <end position="343"/>
    </location>
</feature>
<feature type="turn" evidence="4">
    <location>
        <begin position="351"/>
        <end position="353"/>
    </location>
</feature>
<feature type="helix" evidence="4">
    <location>
        <begin position="354"/>
        <end position="362"/>
    </location>
</feature>
<feature type="turn" evidence="4">
    <location>
        <begin position="363"/>
        <end position="366"/>
    </location>
</feature>
<feature type="helix" evidence="4">
    <location>
        <begin position="370"/>
        <end position="377"/>
    </location>
</feature>
<feature type="helix" evidence="4">
    <location>
        <begin position="379"/>
        <end position="384"/>
    </location>
</feature>
<feature type="turn" evidence="4">
    <location>
        <begin position="388"/>
        <end position="390"/>
    </location>
</feature>
<feature type="strand" evidence="4">
    <location>
        <begin position="402"/>
        <end position="406"/>
    </location>
</feature>
<feature type="helix" evidence="4">
    <location>
        <begin position="415"/>
        <end position="417"/>
    </location>
</feature>
<feature type="strand" evidence="4">
    <location>
        <begin position="420"/>
        <end position="423"/>
    </location>
</feature>
<feature type="turn" evidence="4">
    <location>
        <begin position="426"/>
        <end position="429"/>
    </location>
</feature>
<feature type="strand" evidence="4">
    <location>
        <begin position="435"/>
        <end position="441"/>
    </location>
</feature>
<feature type="strand" evidence="4">
    <location>
        <begin position="444"/>
        <end position="448"/>
    </location>
</feature>
<feature type="helix" evidence="4">
    <location>
        <begin position="469"/>
        <end position="478"/>
    </location>
</feature>
<gene>
    <name type="primary">DPYSL5</name>
    <name type="synonym">CRMP5</name>
    <name type="synonym">ULIP6</name>
</gene>
<reference key="1">
    <citation type="submission" date="2000-05" db="EMBL/GenBank/DDBJ databases">
        <title>Ulip6, a new human Unc-33-like phosphoprotein.</title>
        <authorList>
            <person name="Aguera M."/>
            <person name="Antoine J.-C."/>
            <person name="Belin M.-F."/>
            <person name="Charrier E."/>
            <person name="Honnorat J."/>
            <person name="Rogemond V."/>
        </authorList>
    </citation>
    <scope>NUCLEOTIDE SEQUENCE [MRNA]</scope>
    <source>
        <tissue>Spinal cord</tissue>
    </source>
</reference>
<reference key="2">
    <citation type="journal article" date="2000" name="FEBS Lett.">
        <title>Ulip6, a novel unc-33 and dihydropyrimidinase related protein highly expressed in developing rat brain.</title>
        <authorList>
            <person name="Horiuchi M."/>
            <person name="El Far O."/>
            <person name="Betz H."/>
        </authorList>
    </citation>
    <scope>NUCLEOTIDE SEQUENCE [MRNA]</scope>
    <source>
        <tissue>Spinal cord</tissue>
    </source>
</reference>
<reference key="3">
    <citation type="journal article" date="2001" name="Ann. Neurol.">
        <title>CRMP-5 neuronal autoantibody: marker of lung cancer and thymoma-related autoimmunity.</title>
        <authorList>
            <person name="Yu Z."/>
            <person name="Kryzer T.J."/>
            <person name="Griesmann G.E."/>
            <person name="Kim K."/>
            <person name="Benarroch E.E."/>
            <person name="Lennon V.A."/>
        </authorList>
    </citation>
    <scope>NUCLEOTIDE SEQUENCE [MRNA]</scope>
</reference>
<reference key="4">
    <citation type="submission" date="2003-05" db="EMBL/GenBank/DDBJ databases">
        <title>Cloning of human full-length CDSs in BD Creator(TM) system donor vector.</title>
        <authorList>
            <person name="Kalnine N."/>
            <person name="Chen X."/>
            <person name="Rolfs A."/>
            <person name="Halleck A."/>
            <person name="Hines L."/>
            <person name="Eisenstein S."/>
            <person name="Koundinya M."/>
            <person name="Raphael J."/>
            <person name="Moreira D."/>
            <person name="Kelley T."/>
            <person name="LaBaer J."/>
            <person name="Lin Y."/>
            <person name="Phelan M."/>
            <person name="Farmer A."/>
        </authorList>
    </citation>
    <scope>NUCLEOTIDE SEQUENCE [LARGE SCALE MRNA]</scope>
</reference>
<reference key="5">
    <citation type="journal article" date="2004" name="Genome Res.">
        <title>The status, quality, and expansion of the NIH full-length cDNA project: the Mammalian Gene Collection (MGC).</title>
        <authorList>
            <consortium name="The MGC Project Team"/>
        </authorList>
    </citation>
    <scope>NUCLEOTIDE SEQUENCE [LARGE SCALE MRNA]</scope>
    <source>
        <tissue>Lung</tissue>
    </source>
</reference>
<reference key="6">
    <citation type="submission" date="2008-12" db="UniProtKB">
        <authorList>
            <person name="Lubec G."/>
            <person name="Afjehi-Sadat L."/>
            <person name="Chen W.-Q."/>
            <person name="Sun Y."/>
        </authorList>
    </citation>
    <scope>PROTEIN SEQUENCE OF 17-40; 204-231; 239-261; 373-383; 394-431; 490-504 AND 527-546</scope>
    <scope>IDENTIFICATION BY MASS SPECTROMETRY</scope>
    <source>
        <tissue>Brain</tissue>
        <tissue>Cajal-Retzius cell</tissue>
        <tissue>Fetal brain cortex</tissue>
    </source>
</reference>
<reference key="7">
    <citation type="journal article" date="2007" name="BMC Genomics">
        <title>The full-ORF clone resource of the German cDNA consortium.</title>
        <authorList>
            <person name="Bechtel S."/>
            <person name="Rosenfelder H."/>
            <person name="Duda A."/>
            <person name="Schmidt C.P."/>
            <person name="Ernst U."/>
            <person name="Wellenreuther R."/>
            <person name="Mehrle A."/>
            <person name="Schuster C."/>
            <person name="Bahr A."/>
            <person name="Bloecker H."/>
            <person name="Heubner D."/>
            <person name="Hoerlein A."/>
            <person name="Michel G."/>
            <person name="Wedler H."/>
            <person name="Koehrer K."/>
            <person name="Ottenwaelder B."/>
            <person name="Poustka A."/>
            <person name="Wiemann S."/>
            <person name="Schupp I."/>
        </authorList>
    </citation>
    <scope>NUCLEOTIDE SEQUENCE [LARGE SCALE MRNA] OF 101-564</scope>
    <source>
        <tissue>Amygdala</tissue>
    </source>
</reference>
<reference key="8">
    <citation type="journal article" date="2011" name="BMC Syst. Biol.">
        <title>Initial characterization of the human central proteome.</title>
        <authorList>
            <person name="Burkard T.R."/>
            <person name="Planyavsky M."/>
            <person name="Kaupe I."/>
            <person name="Breitwieser F.P."/>
            <person name="Buerckstuemmer T."/>
            <person name="Bennett K.L."/>
            <person name="Superti-Furga G."/>
            <person name="Colinge J."/>
        </authorList>
    </citation>
    <scope>IDENTIFICATION BY MASS SPECTROMETRY [LARGE SCALE ANALYSIS]</scope>
</reference>
<reference key="9">
    <citation type="journal article" date="2021" name="Am. J. Hum. Genet.">
        <title>Missense variants in DPYSL5 cause a neurodevelopmental disorder with corpus callosum agenesis and cerebellar abnormalities.</title>
        <authorList>
            <person name="Jeanne M."/>
            <person name="Demory H."/>
            <person name="Moutal A."/>
            <person name="Vuillaume M.L."/>
            <person name="Blesson S."/>
            <person name="Thepault R.A."/>
            <person name="Marouillat S."/>
            <person name="Halewa J."/>
            <person name="Maas S.M."/>
            <person name="Motazacker M.M."/>
            <person name="Mancini G.M.S."/>
            <person name="van Slegtenhorst M.A."/>
            <person name="Andreou A."/>
            <person name="Cox H."/>
            <person name="Vogt J."/>
            <person name="Laufman J."/>
            <person name="Kostandyan N."/>
            <person name="Babikyan D."/>
            <person name="Hancarova M."/>
            <person name="Bendova S."/>
            <person name="Sedlacek Z."/>
            <person name="Aldinger K.A."/>
            <person name="Sherr E.H."/>
            <person name="Argilli E."/>
            <person name="England E.M."/>
            <person name="Audebert-Bellanger S."/>
            <person name="Bonneau D."/>
            <person name="Colin E."/>
            <person name="Denomme-Pichon A.S."/>
            <person name="Gilbert-Dussardier B."/>
            <person name="Isidor B."/>
            <person name="Kuery S."/>
            <person name="Odent S."/>
            <person name="Redon R."/>
            <person name="Khanna R."/>
            <person name="Dobyns W.B."/>
            <person name="Bezieau S."/>
            <person name="Honnorat J."/>
            <person name="Lohkamp B."/>
            <person name="Toutain A."/>
            <person name="Laumonnier F."/>
        </authorList>
    </citation>
    <scope>VARIANTS RTSC4 LYS-41 AND ARG-47</scope>
    <scope>INVOLVEMENT IN RTSC4</scope>
    <scope>FUNCTION</scope>
    <scope>INTERACTION WITH MAP2 AND TUBB3</scope>
    <scope>CHARACTERIZATION OF VARIANTS RTSC4 LYS-41 AND ARG-47</scope>
</reference>
<organism>
    <name type="scientific">Homo sapiens</name>
    <name type="common">Human</name>
    <dbReference type="NCBI Taxonomy" id="9606"/>
    <lineage>
        <taxon>Eukaryota</taxon>
        <taxon>Metazoa</taxon>
        <taxon>Chordata</taxon>
        <taxon>Craniata</taxon>
        <taxon>Vertebrata</taxon>
        <taxon>Euteleostomi</taxon>
        <taxon>Mammalia</taxon>
        <taxon>Eutheria</taxon>
        <taxon>Euarchontoglires</taxon>
        <taxon>Primates</taxon>
        <taxon>Haplorrhini</taxon>
        <taxon>Catarrhini</taxon>
        <taxon>Hominidae</taxon>
        <taxon>Homo</taxon>
    </lineage>
</organism>
<name>DPYL5_HUMAN</name>